<reference key="1">
    <citation type="submission" date="2006-10" db="EMBL/GenBank/DDBJ databases">
        <title>Complete sequence of chromosome of Pelobacter propionicus DSM 2379.</title>
        <authorList>
            <consortium name="US DOE Joint Genome Institute"/>
            <person name="Copeland A."/>
            <person name="Lucas S."/>
            <person name="Lapidus A."/>
            <person name="Barry K."/>
            <person name="Detter J.C."/>
            <person name="Glavina del Rio T."/>
            <person name="Hammon N."/>
            <person name="Israni S."/>
            <person name="Dalin E."/>
            <person name="Tice H."/>
            <person name="Pitluck S."/>
            <person name="Saunders E."/>
            <person name="Brettin T."/>
            <person name="Bruce D."/>
            <person name="Han C."/>
            <person name="Tapia R."/>
            <person name="Schmutz J."/>
            <person name="Larimer F."/>
            <person name="Land M."/>
            <person name="Hauser L."/>
            <person name="Kyrpides N."/>
            <person name="Kim E."/>
            <person name="Lovley D."/>
            <person name="Richardson P."/>
        </authorList>
    </citation>
    <scope>NUCLEOTIDE SEQUENCE [LARGE SCALE GENOMIC DNA]</scope>
    <source>
        <strain>DSM 2379 / NBRC 103807 / OttBd1</strain>
    </source>
</reference>
<evidence type="ECO:0000255" key="1">
    <source>
        <dbReference type="HAMAP-Rule" id="MF_01358"/>
    </source>
</evidence>
<protein>
    <recommendedName>
        <fullName evidence="1">NADH-quinone oxidoreductase subunit D</fullName>
        <ecNumber evidence="1">7.1.1.-</ecNumber>
    </recommendedName>
    <alternativeName>
        <fullName evidence="1">NADH dehydrogenase I subunit D</fullName>
    </alternativeName>
    <alternativeName>
        <fullName evidence="1">NDH-1 subunit D</fullName>
    </alternativeName>
</protein>
<sequence length="403" mass="45753">MEYKSPVRSNLEQTADPNHVLVNMGPSHPATHGTIQIIAALDGERVAKADIHCGYLHRGFEKESEHHTYHKIIPFTDRLNYCSALNNNFAYVEGVEKLLGIELTPRCIYLRTLLAEYNRVADHVTCVAATVMEMGAMTAFLYLMTIRDYIFEHLNQLTGARLTYSFARVGGLKNDLPDGWLERLEEILQFTEKYCGRIHGLLDRNRIFIDRTRDVGAMSPEHALNWGYTGPILRSTGAKIDIRKDNPYLAYADLDFEVPVGIKGDNYDRYYVRMREIDESISMVRQCMKKLPDGPVNIDDRRIMYPTKDKVYTKIEYLISHFKLVIDGIQVPAGEIYVSHEAPNGELGFYLISDGSGRPYKLHVRSPSFAHMGGMHTLLEGYQVADVIATFGSMNMIGGECDR</sequence>
<accession>A1ALP2</accession>
<name>NUOD_PELPD</name>
<organism>
    <name type="scientific">Pelobacter propionicus (strain DSM 2379 / NBRC 103807 / OttBd1)</name>
    <dbReference type="NCBI Taxonomy" id="338966"/>
    <lineage>
        <taxon>Bacteria</taxon>
        <taxon>Pseudomonadati</taxon>
        <taxon>Thermodesulfobacteriota</taxon>
        <taxon>Desulfuromonadia</taxon>
        <taxon>Desulfuromonadales</taxon>
        <taxon>Desulfuromonadaceae</taxon>
        <taxon>Pelobacter</taxon>
    </lineage>
</organism>
<comment type="function">
    <text evidence="1">NDH-1 shuttles electrons from NADH, via FMN and iron-sulfur (Fe-S) centers, to quinones in the respiratory chain. The immediate electron acceptor for the enzyme in this species is believed to be ubiquinone. Couples the redox reaction to proton translocation (for every two electrons transferred, four hydrogen ions are translocated across the cytoplasmic membrane), and thus conserves the redox energy in a proton gradient.</text>
</comment>
<comment type="catalytic activity">
    <reaction evidence="1">
        <text>a quinone + NADH + 5 H(+)(in) = a quinol + NAD(+) + 4 H(+)(out)</text>
        <dbReference type="Rhea" id="RHEA:57888"/>
        <dbReference type="ChEBI" id="CHEBI:15378"/>
        <dbReference type="ChEBI" id="CHEBI:24646"/>
        <dbReference type="ChEBI" id="CHEBI:57540"/>
        <dbReference type="ChEBI" id="CHEBI:57945"/>
        <dbReference type="ChEBI" id="CHEBI:132124"/>
    </reaction>
</comment>
<comment type="subunit">
    <text evidence="1">NDH-1 is composed of 14 different subunits. Subunits NuoB, C, D, E, F, and G constitute the peripheral sector of the complex.</text>
</comment>
<comment type="subcellular location">
    <subcellularLocation>
        <location evidence="1">Cell inner membrane</location>
        <topology evidence="1">Peripheral membrane protein</topology>
        <orientation evidence="1">Cytoplasmic side</orientation>
    </subcellularLocation>
</comment>
<comment type="similarity">
    <text evidence="1">Belongs to the complex I 49 kDa subunit family.</text>
</comment>
<proteinExistence type="inferred from homology"/>
<feature type="chain" id="PRO_0000371900" description="NADH-quinone oxidoreductase subunit D">
    <location>
        <begin position="1"/>
        <end position="403"/>
    </location>
</feature>
<keyword id="KW-0997">Cell inner membrane</keyword>
<keyword id="KW-1003">Cell membrane</keyword>
<keyword id="KW-0472">Membrane</keyword>
<keyword id="KW-0520">NAD</keyword>
<keyword id="KW-0874">Quinone</keyword>
<keyword id="KW-1185">Reference proteome</keyword>
<keyword id="KW-1278">Translocase</keyword>
<keyword id="KW-0813">Transport</keyword>
<keyword id="KW-0830">Ubiquinone</keyword>
<gene>
    <name evidence="1" type="primary">nuoD1</name>
    <name type="ordered locus">Ppro_0631</name>
</gene>
<gene>
    <name evidence="1" type="primary">nuoD2</name>
    <name type="ordered locus">Ppro_1626</name>
</gene>
<gene>
    <name evidence="1" type="primary">nuoD3</name>
    <name type="ordered locus">Ppro_3190</name>
</gene>
<dbReference type="EC" id="7.1.1.-" evidence="1"/>
<dbReference type="EMBL" id="CP000482">
    <property type="protein sequence ID" value="ABK98262.1"/>
    <property type="molecule type" value="Genomic_DNA"/>
</dbReference>
<dbReference type="EMBL" id="CP000482">
    <property type="protein sequence ID" value="ABK99241.1"/>
    <property type="molecule type" value="Genomic_DNA"/>
</dbReference>
<dbReference type="EMBL" id="CP000482">
    <property type="protein sequence ID" value="ABL00784.1"/>
    <property type="molecule type" value="Genomic_DNA"/>
</dbReference>
<dbReference type="RefSeq" id="WP_011734575.1">
    <property type="nucleotide sequence ID" value="NC_008609.1"/>
</dbReference>
<dbReference type="SMR" id="A1ALP2"/>
<dbReference type="STRING" id="338966.Ppro_0631"/>
<dbReference type="KEGG" id="ppd:Ppro_0631"/>
<dbReference type="KEGG" id="ppd:Ppro_1626"/>
<dbReference type="KEGG" id="ppd:Ppro_3190"/>
<dbReference type="eggNOG" id="COG0649">
    <property type="taxonomic scope" value="Bacteria"/>
</dbReference>
<dbReference type="HOGENOM" id="CLU_015134_1_2_7"/>
<dbReference type="OrthoDB" id="9801496at2"/>
<dbReference type="Proteomes" id="UP000006732">
    <property type="component" value="Chromosome"/>
</dbReference>
<dbReference type="GO" id="GO:0005886">
    <property type="term" value="C:plasma membrane"/>
    <property type="evidence" value="ECO:0007669"/>
    <property type="project" value="UniProtKB-SubCell"/>
</dbReference>
<dbReference type="GO" id="GO:0051287">
    <property type="term" value="F:NAD binding"/>
    <property type="evidence" value="ECO:0007669"/>
    <property type="project" value="InterPro"/>
</dbReference>
<dbReference type="GO" id="GO:0050136">
    <property type="term" value="F:NADH:ubiquinone reductase (non-electrogenic) activity"/>
    <property type="evidence" value="ECO:0007669"/>
    <property type="project" value="UniProtKB-UniRule"/>
</dbReference>
<dbReference type="GO" id="GO:0048038">
    <property type="term" value="F:quinone binding"/>
    <property type="evidence" value="ECO:0007669"/>
    <property type="project" value="UniProtKB-KW"/>
</dbReference>
<dbReference type="Gene3D" id="1.10.645.10">
    <property type="entry name" value="Cytochrome-c3 Hydrogenase, chain B"/>
    <property type="match status" value="1"/>
</dbReference>
<dbReference type="HAMAP" id="MF_01358">
    <property type="entry name" value="NDH1_NuoD"/>
    <property type="match status" value="1"/>
</dbReference>
<dbReference type="InterPro" id="IPR001135">
    <property type="entry name" value="NADH_Q_OxRdtase_suD"/>
</dbReference>
<dbReference type="InterPro" id="IPR022885">
    <property type="entry name" value="NDH1_su_D/H"/>
</dbReference>
<dbReference type="InterPro" id="IPR029014">
    <property type="entry name" value="NiFe-Hase_large"/>
</dbReference>
<dbReference type="NCBIfam" id="TIGR01962">
    <property type="entry name" value="NuoD"/>
    <property type="match status" value="1"/>
</dbReference>
<dbReference type="NCBIfam" id="NF004739">
    <property type="entry name" value="PRK06075.1"/>
    <property type="match status" value="1"/>
</dbReference>
<dbReference type="PANTHER" id="PTHR11993:SF10">
    <property type="entry name" value="NADH DEHYDROGENASE [UBIQUINONE] IRON-SULFUR PROTEIN 2, MITOCHONDRIAL"/>
    <property type="match status" value="1"/>
</dbReference>
<dbReference type="PANTHER" id="PTHR11993">
    <property type="entry name" value="NADH-UBIQUINONE OXIDOREDUCTASE 49 KDA SUBUNIT"/>
    <property type="match status" value="1"/>
</dbReference>
<dbReference type="Pfam" id="PF00346">
    <property type="entry name" value="Complex1_49kDa"/>
    <property type="match status" value="1"/>
</dbReference>
<dbReference type="SUPFAM" id="SSF56762">
    <property type="entry name" value="HydB/Nqo4-like"/>
    <property type="match status" value="1"/>
</dbReference>